<evidence type="ECO:0000255" key="1">
    <source>
        <dbReference type="HAMAP-Rule" id="MF_00373"/>
    </source>
</evidence>
<evidence type="ECO:0000305" key="2"/>
<dbReference type="EMBL" id="CP000323">
    <property type="protein sequence ID" value="ABE75766.1"/>
    <property type="molecule type" value="Genomic_DNA"/>
</dbReference>
<dbReference type="RefSeq" id="WP_011280972.1">
    <property type="nucleotide sequence ID" value="NC_007969.1"/>
</dbReference>
<dbReference type="SMR" id="Q1Q987"/>
<dbReference type="STRING" id="335284.Pcryo_1989"/>
<dbReference type="KEGG" id="pcr:Pcryo_1989"/>
<dbReference type="eggNOG" id="COG0227">
    <property type="taxonomic scope" value="Bacteria"/>
</dbReference>
<dbReference type="HOGENOM" id="CLU_064548_3_1_6"/>
<dbReference type="Proteomes" id="UP000002425">
    <property type="component" value="Chromosome"/>
</dbReference>
<dbReference type="GO" id="GO:0022625">
    <property type="term" value="C:cytosolic large ribosomal subunit"/>
    <property type="evidence" value="ECO:0007669"/>
    <property type="project" value="TreeGrafter"/>
</dbReference>
<dbReference type="GO" id="GO:0003735">
    <property type="term" value="F:structural constituent of ribosome"/>
    <property type="evidence" value="ECO:0007669"/>
    <property type="project" value="InterPro"/>
</dbReference>
<dbReference type="GO" id="GO:0006412">
    <property type="term" value="P:translation"/>
    <property type="evidence" value="ECO:0007669"/>
    <property type="project" value="UniProtKB-UniRule"/>
</dbReference>
<dbReference type="FunFam" id="2.30.170.40:FF:000001">
    <property type="entry name" value="50S ribosomal protein L28"/>
    <property type="match status" value="1"/>
</dbReference>
<dbReference type="Gene3D" id="2.30.170.40">
    <property type="entry name" value="Ribosomal protein L28/L24"/>
    <property type="match status" value="1"/>
</dbReference>
<dbReference type="HAMAP" id="MF_00373">
    <property type="entry name" value="Ribosomal_bL28"/>
    <property type="match status" value="1"/>
</dbReference>
<dbReference type="InterPro" id="IPR026569">
    <property type="entry name" value="Ribosomal_bL28"/>
</dbReference>
<dbReference type="InterPro" id="IPR034704">
    <property type="entry name" value="Ribosomal_bL28/bL31-like_sf"/>
</dbReference>
<dbReference type="InterPro" id="IPR001383">
    <property type="entry name" value="Ribosomal_bL28_bact-type"/>
</dbReference>
<dbReference type="InterPro" id="IPR037147">
    <property type="entry name" value="Ribosomal_bL28_sf"/>
</dbReference>
<dbReference type="NCBIfam" id="TIGR00009">
    <property type="entry name" value="L28"/>
    <property type="match status" value="1"/>
</dbReference>
<dbReference type="PANTHER" id="PTHR13528">
    <property type="entry name" value="39S RIBOSOMAL PROTEIN L28, MITOCHONDRIAL"/>
    <property type="match status" value="1"/>
</dbReference>
<dbReference type="PANTHER" id="PTHR13528:SF2">
    <property type="entry name" value="LARGE RIBOSOMAL SUBUNIT PROTEIN BL28M"/>
    <property type="match status" value="1"/>
</dbReference>
<dbReference type="Pfam" id="PF00830">
    <property type="entry name" value="Ribosomal_L28"/>
    <property type="match status" value="1"/>
</dbReference>
<dbReference type="SUPFAM" id="SSF143800">
    <property type="entry name" value="L28p-like"/>
    <property type="match status" value="1"/>
</dbReference>
<proteinExistence type="inferred from homology"/>
<reference key="1">
    <citation type="submission" date="2006-03" db="EMBL/GenBank/DDBJ databases">
        <title>Complete sequence of chromosome of Psychrobacter cryohalolentis K5.</title>
        <authorList>
            <consortium name="US DOE Joint Genome Institute"/>
            <person name="Copeland A."/>
            <person name="Lucas S."/>
            <person name="Lapidus A."/>
            <person name="Barry K."/>
            <person name="Detter J.C."/>
            <person name="Glavina T."/>
            <person name="Hammon N."/>
            <person name="Israni S."/>
            <person name="Dalin E."/>
            <person name="Tice H."/>
            <person name="Pitluck S."/>
            <person name="Brettin T."/>
            <person name="Bruce D."/>
            <person name="Han C."/>
            <person name="Tapia R."/>
            <person name="Sims D.R."/>
            <person name="Gilna P."/>
            <person name="Schmutz J."/>
            <person name="Larimer F."/>
            <person name="Land M."/>
            <person name="Hauser L."/>
            <person name="Kyrpides N."/>
            <person name="Kim E."/>
            <person name="Richardson P."/>
        </authorList>
    </citation>
    <scope>NUCLEOTIDE SEQUENCE [LARGE SCALE GENOMIC DNA]</scope>
    <source>
        <strain>ATCC BAA-1226 / DSM 17306 / VKM B-2378 / K5</strain>
    </source>
</reference>
<gene>
    <name evidence="1" type="primary">rpmB</name>
    <name type="ordered locus">Pcryo_1989</name>
</gene>
<feature type="chain" id="PRO_1000007321" description="Large ribosomal subunit protein bL28">
    <location>
        <begin position="1"/>
        <end position="78"/>
    </location>
</feature>
<protein>
    <recommendedName>
        <fullName evidence="1">Large ribosomal subunit protein bL28</fullName>
    </recommendedName>
    <alternativeName>
        <fullName evidence="2">50S ribosomal protein L28</fullName>
    </alternativeName>
</protein>
<keyword id="KW-0687">Ribonucleoprotein</keyword>
<keyword id="KW-0689">Ribosomal protein</keyword>
<accession>Q1Q987</accession>
<organism>
    <name type="scientific">Psychrobacter cryohalolentis (strain ATCC BAA-1226 / DSM 17306 / VKM B-2378 / K5)</name>
    <dbReference type="NCBI Taxonomy" id="335284"/>
    <lineage>
        <taxon>Bacteria</taxon>
        <taxon>Pseudomonadati</taxon>
        <taxon>Pseudomonadota</taxon>
        <taxon>Gammaproteobacteria</taxon>
        <taxon>Moraxellales</taxon>
        <taxon>Moraxellaceae</taxon>
        <taxon>Psychrobacter</taxon>
    </lineage>
</organism>
<sequence length="78" mass="9111">MSRVCQVTGKRPMVGNNVSHANNKTRRRFLPNLHNHRFWVESENRFVRLRVSTKGMRIIDKLGIDKVLVDLRAQGQKV</sequence>
<comment type="similarity">
    <text evidence="1">Belongs to the bacterial ribosomal protein bL28 family.</text>
</comment>
<name>RL28_PSYCK</name>